<dbReference type="EMBL" id="AF481863">
    <property type="protein sequence ID" value="AAM77003.1"/>
    <property type="molecule type" value="Genomic_RNA"/>
</dbReference>
<dbReference type="PIR" id="S58183">
    <property type="entry name" value="S58183"/>
</dbReference>
<dbReference type="Proteomes" id="UP000007543">
    <property type="component" value="Genome"/>
</dbReference>
<dbReference type="GO" id="GO:0044178">
    <property type="term" value="C:host cell Golgi membrane"/>
    <property type="evidence" value="ECO:0007669"/>
    <property type="project" value="UniProtKB-SubCell"/>
</dbReference>
<dbReference type="GO" id="GO:0016020">
    <property type="term" value="C:membrane"/>
    <property type="evidence" value="ECO:0007669"/>
    <property type="project" value="UniProtKB-UniRule"/>
</dbReference>
<dbReference type="GO" id="GO:0140975">
    <property type="term" value="P:disruption of cellular anatomical structure in another organism"/>
    <property type="evidence" value="ECO:0007669"/>
    <property type="project" value="UniProtKB-UniRule"/>
</dbReference>
<dbReference type="GO" id="GO:0046760">
    <property type="term" value="P:viral budding from Golgi membrane"/>
    <property type="evidence" value="ECO:0007669"/>
    <property type="project" value="UniProtKB-UniRule"/>
</dbReference>
<dbReference type="CDD" id="cd21532">
    <property type="entry name" value="HKU1-CoV-like_E"/>
    <property type="match status" value="1"/>
</dbReference>
<dbReference type="HAMAP" id="MF_04204">
    <property type="entry name" value="BETA_CORONA_E"/>
    <property type="match status" value="1"/>
</dbReference>
<dbReference type="InterPro" id="IPR043506">
    <property type="entry name" value="E_protein_bCoV"/>
</dbReference>
<dbReference type="InterPro" id="IPR003873">
    <property type="entry name" value="E_protein_CoV"/>
</dbReference>
<dbReference type="Pfam" id="PF02723">
    <property type="entry name" value="CoV_E"/>
    <property type="match status" value="1"/>
</dbReference>
<dbReference type="PROSITE" id="PS51926">
    <property type="entry name" value="COV_E"/>
    <property type="match status" value="1"/>
</dbReference>
<keyword id="KW-0053">Apoptosis</keyword>
<keyword id="KW-1040">Host Golgi apparatus</keyword>
<keyword id="KW-1043">Host membrane</keyword>
<keyword id="KW-0472">Membrane</keyword>
<keyword id="KW-0812">Transmembrane</keyword>
<keyword id="KW-1133">Transmembrane helix</keyword>
<comment type="function">
    <text evidence="1">Plays a central role in virus morphogenesis and assembly. Acts as a viroporin and self-assembles in host membranes forming pentameric protein-lipid pores that allow ion transport. Also plays a role in the induction of apoptosis.</text>
</comment>
<comment type="subunit">
    <text evidence="1">Homopentamer. Interacts with membrane protein M in the budding compartment of the host cell, which is located between endoplasmic reticulum and the Golgi complex. Interacts with Nucleoprotein.</text>
</comment>
<comment type="subcellular location">
    <subcellularLocation>
        <location evidence="1">Host Golgi apparatus membrane</location>
        <topology evidence="1">Single-pass type III membrane protein</topology>
    </subcellularLocation>
    <text evidence="1">The cytoplasmic tail functions as a Golgi complex-targeting signal.</text>
</comment>
<comment type="similarity">
    <text evidence="1">Belongs to the betacoronaviruses E protein family.</text>
</comment>
<protein>
    <recommendedName>
        <fullName evidence="1">Envelope small membrane protein</fullName>
        <shortName evidence="1">E protein</shortName>
        <shortName evidence="1">sM protein</shortName>
    </recommendedName>
</protein>
<organism>
    <name type="scientific">Porcine hemagglutinating encephalomyelitis virus (strain IAF-404)</name>
    <name type="common">HEV</name>
    <dbReference type="NCBI Taxonomy" id="230236"/>
    <lineage>
        <taxon>Viruses</taxon>
        <taxon>Riboviria</taxon>
        <taxon>Orthornavirae</taxon>
        <taxon>Pisuviricota</taxon>
        <taxon>Pisoniviricetes</taxon>
        <taxon>Nidovirales</taxon>
        <taxon>Cornidovirineae</taxon>
        <taxon>Coronaviridae</taxon>
        <taxon>Orthocoronavirinae</taxon>
        <taxon>Betacoronavirus</taxon>
        <taxon>Embecovirus</taxon>
        <taxon>Betacoronavirus 1</taxon>
    </lineage>
</organism>
<organismHost>
    <name type="scientific">Sus scrofa</name>
    <name type="common">Pig</name>
    <dbReference type="NCBI Taxonomy" id="9823"/>
</organismHost>
<gene>
    <name evidence="1" type="primary">E</name>
    <name type="synonym">sM</name>
    <name type="ORF">5b</name>
</gene>
<reference key="1">
    <citation type="journal article" date="2002" name="J. Gen. Virol.">
        <title>Sequence of the 3'-terminal end (8.1 kb) of the genome of porcine haemagglutinating encephalomyelitis virus: comparison with other haemagglutinating coronaviruses.</title>
        <authorList>
            <person name="Sasseville A.M.-J."/>
            <person name="Boutin M."/>
            <person name="Gelinas A.-M."/>
            <person name="Dea S."/>
        </authorList>
    </citation>
    <scope>NUCLEOTIDE SEQUENCE [GENOMIC RNA]</scope>
</reference>
<proteinExistence type="inferred from homology"/>
<feature type="chain" id="PRO_0000283976" description="Envelope small membrane protein">
    <location>
        <begin position="1"/>
        <end position="84"/>
    </location>
</feature>
<feature type="topological domain" description="Virion surface" evidence="1">
    <location>
        <begin position="1"/>
        <end position="18"/>
    </location>
</feature>
<feature type="transmembrane region" description="Helical" evidence="1">
    <location>
        <begin position="19"/>
        <end position="39"/>
    </location>
</feature>
<feature type="topological domain" description="Intravirion" evidence="1">
    <location>
        <begin position="40"/>
        <end position="80"/>
    </location>
</feature>
<sequence length="84" mass="9550">MFMADAYLADTVWYVGQIIFIVAICLLVIIVVVAFLATFKLCIQLCGMCNTLVLSPSIYVFNRGRQFYEFYNDVKPPVLDVDDV</sequence>
<evidence type="ECO:0000255" key="1">
    <source>
        <dbReference type="HAMAP-Rule" id="MF_04204"/>
    </source>
</evidence>
<name>VEMP_CVPIA</name>
<accession>P0C2Q9</accession>
<accession>Q84730</accession>